<comment type="subcellular location">
    <subcellularLocation>
        <location evidence="1">Secreted</location>
    </subcellularLocation>
</comment>
<comment type="similarity">
    <text evidence="3">Belongs to the DEFL family.</text>
</comment>
<comment type="caution">
    <text evidence="3">Lacks 1 of the 4 disulfide bonds, which are conserved features of the family.</text>
</comment>
<reference key="1">
    <citation type="journal article" date="1998" name="DNA Res.">
        <title>Structural analysis of Arabidopsis thaliana chromosome 5. VII. Sequence features of the regions of 1,013,767 bp covered by sixteen physically assigned P1 and TAC clones.</title>
        <authorList>
            <person name="Nakamura Y."/>
            <person name="Sato S."/>
            <person name="Asamizu E."/>
            <person name="Kaneko T."/>
            <person name="Kotani H."/>
            <person name="Miyajima N."/>
            <person name="Tabata S."/>
        </authorList>
    </citation>
    <scope>NUCLEOTIDE SEQUENCE [LARGE SCALE GENOMIC DNA]</scope>
    <source>
        <strain>cv. Columbia</strain>
    </source>
</reference>
<reference key="2">
    <citation type="journal article" date="2017" name="Plant J.">
        <title>Araport11: a complete reannotation of the Arabidopsis thaliana reference genome.</title>
        <authorList>
            <person name="Cheng C.Y."/>
            <person name="Krishnakumar V."/>
            <person name="Chan A.P."/>
            <person name="Thibaud-Nissen F."/>
            <person name="Schobel S."/>
            <person name="Town C.D."/>
        </authorList>
    </citation>
    <scope>GENOME REANNOTATION</scope>
    <source>
        <strain>cv. Columbia</strain>
    </source>
</reference>
<reference key="3">
    <citation type="journal article" date="2005" name="Plant Physiol.">
        <title>Genome organization of more than 300 defensin-like genes in Arabidopsis.</title>
        <authorList>
            <person name="Silverstein K.A.T."/>
            <person name="Graham M.A."/>
            <person name="Paape T.D."/>
            <person name="VandenBosch K.A."/>
        </authorList>
    </citation>
    <scope>GENE FAMILY</scope>
</reference>
<accession>Q2V2W6</accession>
<proteinExistence type="inferred from homology"/>
<keyword id="KW-0929">Antimicrobial</keyword>
<keyword id="KW-1015">Disulfide bond</keyword>
<keyword id="KW-0295">Fungicide</keyword>
<keyword id="KW-0611">Plant defense</keyword>
<keyword id="KW-1185">Reference proteome</keyword>
<keyword id="KW-0964">Secreted</keyword>
<keyword id="KW-0732">Signal</keyword>
<organism>
    <name type="scientific">Arabidopsis thaliana</name>
    <name type="common">Mouse-ear cress</name>
    <dbReference type="NCBI Taxonomy" id="3702"/>
    <lineage>
        <taxon>Eukaryota</taxon>
        <taxon>Viridiplantae</taxon>
        <taxon>Streptophyta</taxon>
        <taxon>Embryophyta</taxon>
        <taxon>Tracheophyta</taxon>
        <taxon>Spermatophyta</taxon>
        <taxon>Magnoliopsida</taxon>
        <taxon>eudicotyledons</taxon>
        <taxon>Gunneridae</taxon>
        <taxon>Pentapetalae</taxon>
        <taxon>rosids</taxon>
        <taxon>malvids</taxon>
        <taxon>Brassicales</taxon>
        <taxon>Brassicaceae</taxon>
        <taxon>Camelineae</taxon>
        <taxon>Arabidopsis</taxon>
    </lineage>
</organism>
<dbReference type="EMBL" id="AB015472">
    <property type="status" value="NOT_ANNOTATED_CDS"/>
    <property type="molecule type" value="Genomic_DNA"/>
</dbReference>
<dbReference type="EMBL" id="CP002688">
    <property type="protein sequence ID" value="AED97380.1"/>
    <property type="molecule type" value="Genomic_DNA"/>
</dbReference>
<dbReference type="RefSeq" id="NP_001032114.1">
    <property type="nucleotide sequence ID" value="NM_001037037.1"/>
</dbReference>
<dbReference type="SMR" id="Q2V2W6"/>
<dbReference type="STRING" id="3702.Q2V2W6"/>
<dbReference type="PaxDb" id="3702-AT5G60805.1"/>
<dbReference type="EnsemblPlants" id="AT5G60805.1">
    <property type="protein sequence ID" value="AT5G60805.1"/>
    <property type="gene ID" value="AT5G60805"/>
</dbReference>
<dbReference type="GeneID" id="3771543"/>
<dbReference type="Gramene" id="AT5G60805.1">
    <property type="protein sequence ID" value="AT5G60805.1"/>
    <property type="gene ID" value="AT5G60805"/>
</dbReference>
<dbReference type="KEGG" id="ath:AT5G60805"/>
<dbReference type="Araport" id="AT5G60805"/>
<dbReference type="TAIR" id="AT5G60805"/>
<dbReference type="HOGENOM" id="CLU_2187546_0_0_1"/>
<dbReference type="InParanoid" id="Q2V2W6"/>
<dbReference type="OMA" id="CVSNLMA"/>
<dbReference type="PhylomeDB" id="Q2V2W6"/>
<dbReference type="PRO" id="PR:Q2V2W6"/>
<dbReference type="Proteomes" id="UP000006548">
    <property type="component" value="Chromosome 5"/>
</dbReference>
<dbReference type="ExpressionAtlas" id="Q2V2W6">
    <property type="expression patterns" value="baseline"/>
</dbReference>
<dbReference type="GO" id="GO:0005576">
    <property type="term" value="C:extracellular region"/>
    <property type="evidence" value="ECO:0007669"/>
    <property type="project" value="UniProtKB-SubCell"/>
</dbReference>
<dbReference type="GO" id="GO:0050832">
    <property type="term" value="P:defense response to fungus"/>
    <property type="evidence" value="ECO:0007669"/>
    <property type="project" value="UniProtKB-KW"/>
</dbReference>
<dbReference type="GO" id="GO:0031640">
    <property type="term" value="P:killing of cells of another organism"/>
    <property type="evidence" value="ECO:0007669"/>
    <property type="project" value="UniProtKB-KW"/>
</dbReference>
<evidence type="ECO:0000250" key="1"/>
<evidence type="ECO:0000255" key="2"/>
<evidence type="ECO:0000305" key="3"/>
<protein>
    <recommendedName>
        <fullName>Putative defensin-like protein 224</fullName>
    </recommendedName>
</protein>
<sequence>MKTLSLFFTLVILISSCVSNLMAKHDSERKAPFSNHGMRLQHPPYLHFQSYRGHFIPEECTELCPQRCLRRHRLMVSCIPQHFCRCSSFQLSPPHIATSPKQYSKK</sequence>
<name>DF224_ARATH</name>
<feature type="signal peptide" evidence="2">
    <location>
        <begin position="1"/>
        <end position="23"/>
    </location>
</feature>
<feature type="chain" id="PRO_0000379716" description="Putative defensin-like protein 224">
    <location>
        <begin position="24"/>
        <end position="106"/>
    </location>
</feature>
<feature type="disulfide bond" evidence="1">
    <location>
        <begin position="60"/>
        <end position="78"/>
    </location>
</feature>
<feature type="disulfide bond" evidence="1">
    <location>
        <begin position="64"/>
        <end position="84"/>
    </location>
</feature>
<feature type="disulfide bond" evidence="1">
    <location>
        <begin position="68"/>
        <end position="86"/>
    </location>
</feature>
<gene>
    <name type="ordered locus">At5g60805</name>
    <name type="ORF">MAE1</name>
</gene>